<feature type="chain" id="PRO_0000164645" description="Morphogenetic protein">
    <location>
        <begin position="1"/>
        <end position="195"/>
    </location>
</feature>
<comment type="function">
    <text>Assembly factor active in membrane morphogenesis.</text>
</comment>
<gene>
    <name type="primary">P12</name>
</gene>
<dbReference type="EMBL" id="M12921">
    <property type="protein sequence ID" value="AAA32359.1"/>
    <property type="molecule type" value="Genomic_RNA"/>
</dbReference>
<dbReference type="PIR" id="B23368">
    <property type="entry name" value="YHBPF6"/>
</dbReference>
<dbReference type="RefSeq" id="NP_620341.1">
    <property type="nucleotide sequence ID" value="NC_003714.1"/>
</dbReference>
<dbReference type="KEGG" id="vg:956431"/>
<dbReference type="Proteomes" id="UP000002610">
    <property type="component" value="Genome"/>
</dbReference>
<proteinExistence type="predicted"/>
<organism>
    <name type="scientific">Pseudomonas phage phi6</name>
    <name type="common">Bacteriophage phi-6</name>
    <dbReference type="NCBI Taxonomy" id="2928686"/>
    <lineage>
        <taxon>Viruses</taxon>
        <taxon>Riboviria</taxon>
        <taxon>Orthornavirae</taxon>
        <taxon>Duplornaviricota</taxon>
        <taxon>Vidaverviricetes</taxon>
        <taxon>Mindivirales</taxon>
        <taxon>Cystoviridae</taxon>
        <taxon>Cystovirus</taxon>
        <taxon>Cystovirus phi6</taxon>
    </lineage>
</organism>
<accession>P07580</accession>
<reference key="1">
    <citation type="journal article" date="1986" name="J. Virol.">
        <title>Nucleotide sequence of the small double-stranded RNA segment of bacteriophage phi 6: novel mechanism of natural translational control.</title>
        <authorList>
            <person name="McGraw T."/>
            <person name="Mindich L."/>
            <person name="Frangione B."/>
        </authorList>
    </citation>
    <scope>NUCLEOTIDE SEQUENCE [GENOMIC RNA]</scope>
</reference>
<name>P12_BPPH6</name>
<protein>
    <recommendedName>
        <fullName>Morphogenetic protein</fullName>
    </recommendedName>
    <alternativeName>
        <fullName>Protein P12</fullName>
    </alternativeName>
</protein>
<organismHost>
    <name type="scientific">Pseudomonas savastanoi pv. phaseolicola</name>
    <name type="common">Pseudomonas syringae pv. phaseolicola</name>
    <dbReference type="NCBI Taxonomy" id="319"/>
</organismHost>
<sequence>MVIGLLKYLTPAVKVQMAARALGLSPAEVAAIDGTLGRVSAMPAVAVVLGGKPLSLATIASVVSDANPSATVGALMPAVQGMVSSDEGASALAKTVVGFMESDPNSDVLVQLLHKVSNLPIVGFGDTQYADPADFLAKGVFPLIRKPEVEVQAAPFTCRQCDHVDHITDVPQTSTFVHKCTSCGFVQMVHRKDVP</sequence>
<keyword id="KW-1185">Reference proteome</keyword>